<reference key="1">
    <citation type="journal article" date="2007" name="PLoS Genet.">
        <title>The complete genome sequence of Yersinia pseudotuberculosis IP31758, the causative agent of Far East scarlet-like fever.</title>
        <authorList>
            <person name="Eppinger M."/>
            <person name="Rosovitz M.J."/>
            <person name="Fricke W.F."/>
            <person name="Rasko D.A."/>
            <person name="Kokorina G."/>
            <person name="Fayolle C."/>
            <person name="Lindler L.E."/>
            <person name="Carniel E."/>
            <person name="Ravel J."/>
        </authorList>
    </citation>
    <scope>NUCLEOTIDE SEQUENCE [LARGE SCALE GENOMIC DNA]</scope>
    <source>
        <strain>IP 31758</strain>
    </source>
</reference>
<evidence type="ECO:0000255" key="1">
    <source>
        <dbReference type="HAMAP-Rule" id="MF_00688"/>
    </source>
</evidence>
<proteinExistence type="inferred from homology"/>
<dbReference type="EC" id="2.3.2.6" evidence="1"/>
<dbReference type="EMBL" id="CP000720">
    <property type="protein sequence ID" value="ABS49425.1"/>
    <property type="molecule type" value="Genomic_DNA"/>
</dbReference>
<dbReference type="RefSeq" id="WP_002211346.1">
    <property type="nucleotide sequence ID" value="NC_009708.1"/>
</dbReference>
<dbReference type="SMR" id="A7FJZ0"/>
<dbReference type="GeneID" id="57977167"/>
<dbReference type="KEGG" id="ypi:YpsIP31758_2603"/>
<dbReference type="HOGENOM" id="CLU_075045_0_0_6"/>
<dbReference type="Proteomes" id="UP000002412">
    <property type="component" value="Chromosome"/>
</dbReference>
<dbReference type="GO" id="GO:0005737">
    <property type="term" value="C:cytoplasm"/>
    <property type="evidence" value="ECO:0007669"/>
    <property type="project" value="UniProtKB-SubCell"/>
</dbReference>
<dbReference type="GO" id="GO:0008914">
    <property type="term" value="F:leucyl-tRNA--protein transferase activity"/>
    <property type="evidence" value="ECO:0007669"/>
    <property type="project" value="UniProtKB-UniRule"/>
</dbReference>
<dbReference type="GO" id="GO:0030163">
    <property type="term" value="P:protein catabolic process"/>
    <property type="evidence" value="ECO:0007669"/>
    <property type="project" value="UniProtKB-UniRule"/>
</dbReference>
<dbReference type="FunFam" id="3.30.70.3550:FF:000001">
    <property type="entry name" value="Leucyl/phenylalanyl-tRNA--protein transferase"/>
    <property type="match status" value="1"/>
</dbReference>
<dbReference type="FunFam" id="3.40.630.70:FF:000001">
    <property type="entry name" value="Leucyl/phenylalanyl-tRNA--protein transferase"/>
    <property type="match status" value="1"/>
</dbReference>
<dbReference type="Gene3D" id="3.40.630.70">
    <property type="entry name" value="Leucyl/phenylalanyl-tRNA-protein transferase, C-terminal domain"/>
    <property type="match status" value="1"/>
</dbReference>
<dbReference type="Gene3D" id="3.30.70.3550">
    <property type="entry name" value="Leucyl/phenylalanyl-tRNA-protein transferase, N-terminal domain"/>
    <property type="match status" value="1"/>
</dbReference>
<dbReference type="HAMAP" id="MF_00688">
    <property type="entry name" value="Leu_Phe_trans"/>
    <property type="match status" value="1"/>
</dbReference>
<dbReference type="InterPro" id="IPR016181">
    <property type="entry name" value="Acyl_CoA_acyltransferase"/>
</dbReference>
<dbReference type="InterPro" id="IPR004616">
    <property type="entry name" value="Leu/Phe-tRNA_Trfase"/>
</dbReference>
<dbReference type="InterPro" id="IPR042203">
    <property type="entry name" value="Leu/Phe-tRNA_Trfase_C"/>
</dbReference>
<dbReference type="InterPro" id="IPR042221">
    <property type="entry name" value="Leu/Phe-tRNA_Trfase_N"/>
</dbReference>
<dbReference type="NCBIfam" id="TIGR00667">
    <property type="entry name" value="aat"/>
    <property type="match status" value="1"/>
</dbReference>
<dbReference type="PANTHER" id="PTHR30098">
    <property type="entry name" value="LEUCYL/PHENYLALANYL-TRNA--PROTEIN TRANSFERASE"/>
    <property type="match status" value="1"/>
</dbReference>
<dbReference type="PANTHER" id="PTHR30098:SF2">
    <property type="entry name" value="LEUCYL_PHENYLALANYL-TRNA--PROTEIN TRANSFERASE"/>
    <property type="match status" value="1"/>
</dbReference>
<dbReference type="Pfam" id="PF03588">
    <property type="entry name" value="Leu_Phe_trans"/>
    <property type="match status" value="1"/>
</dbReference>
<dbReference type="SUPFAM" id="SSF55729">
    <property type="entry name" value="Acyl-CoA N-acyltransferases (Nat)"/>
    <property type="match status" value="1"/>
</dbReference>
<feature type="chain" id="PRO_1000062010" description="Leucyl/phenylalanyl-tRNA--protein transferase">
    <location>
        <begin position="1"/>
        <end position="236"/>
    </location>
</feature>
<protein>
    <recommendedName>
        <fullName evidence="1">Leucyl/phenylalanyl-tRNA--protein transferase</fullName>
        <ecNumber evidence="1">2.3.2.6</ecNumber>
    </recommendedName>
    <alternativeName>
        <fullName evidence="1">L/F-transferase</fullName>
    </alternativeName>
    <alternativeName>
        <fullName evidence="1">Leucyltransferase</fullName>
    </alternativeName>
    <alternativeName>
        <fullName evidence="1">Phenyalanyltransferase</fullName>
    </alternativeName>
</protein>
<gene>
    <name evidence="1" type="primary">aat</name>
    <name type="ordered locus">YpsIP31758_2603</name>
</gene>
<name>LFTR_YERP3</name>
<accession>A7FJZ0</accession>
<sequence length="236" mass="26403">MRVTQLSSQSFIFPSPELALREPNGLLALGGDLTAPRLLAAYQRGIFPWFNPGEMILWWSPDPRAVLFPEDLHISRSMRRFIRHCPYRFTLNHAFADVISACATERDEGTWIGRDVQQAYCQLHALGHAHSLEVWLENELVGGLYGVAVGAVFCGESMFSRADNASKSALMVFCHHFTQHGGELIDCQVLNAHTASLGAVEIPRNFFLQQLSQLQFSPLPAECWLPQSLNFSSAMQ</sequence>
<keyword id="KW-0012">Acyltransferase</keyword>
<keyword id="KW-0963">Cytoplasm</keyword>
<keyword id="KW-0808">Transferase</keyword>
<organism>
    <name type="scientific">Yersinia pseudotuberculosis serotype O:1b (strain IP 31758)</name>
    <dbReference type="NCBI Taxonomy" id="349747"/>
    <lineage>
        <taxon>Bacteria</taxon>
        <taxon>Pseudomonadati</taxon>
        <taxon>Pseudomonadota</taxon>
        <taxon>Gammaproteobacteria</taxon>
        <taxon>Enterobacterales</taxon>
        <taxon>Yersiniaceae</taxon>
        <taxon>Yersinia</taxon>
    </lineage>
</organism>
<comment type="function">
    <text evidence="1">Functions in the N-end rule pathway of protein degradation where it conjugates Leu, Phe and, less efficiently, Met from aminoacyl-tRNAs to the N-termini of proteins containing an N-terminal arginine or lysine.</text>
</comment>
<comment type="catalytic activity">
    <reaction evidence="1">
        <text>N-terminal L-lysyl-[protein] + L-leucyl-tRNA(Leu) = N-terminal L-leucyl-L-lysyl-[protein] + tRNA(Leu) + H(+)</text>
        <dbReference type="Rhea" id="RHEA:12340"/>
        <dbReference type="Rhea" id="RHEA-COMP:9613"/>
        <dbReference type="Rhea" id="RHEA-COMP:9622"/>
        <dbReference type="Rhea" id="RHEA-COMP:12670"/>
        <dbReference type="Rhea" id="RHEA-COMP:12671"/>
        <dbReference type="ChEBI" id="CHEBI:15378"/>
        <dbReference type="ChEBI" id="CHEBI:65249"/>
        <dbReference type="ChEBI" id="CHEBI:78442"/>
        <dbReference type="ChEBI" id="CHEBI:78494"/>
        <dbReference type="ChEBI" id="CHEBI:133043"/>
        <dbReference type="EC" id="2.3.2.6"/>
    </reaction>
</comment>
<comment type="catalytic activity">
    <reaction evidence="1">
        <text>N-terminal L-arginyl-[protein] + L-leucyl-tRNA(Leu) = N-terminal L-leucyl-L-arginyl-[protein] + tRNA(Leu) + H(+)</text>
        <dbReference type="Rhea" id="RHEA:50416"/>
        <dbReference type="Rhea" id="RHEA-COMP:9613"/>
        <dbReference type="Rhea" id="RHEA-COMP:9622"/>
        <dbReference type="Rhea" id="RHEA-COMP:12672"/>
        <dbReference type="Rhea" id="RHEA-COMP:12673"/>
        <dbReference type="ChEBI" id="CHEBI:15378"/>
        <dbReference type="ChEBI" id="CHEBI:64719"/>
        <dbReference type="ChEBI" id="CHEBI:78442"/>
        <dbReference type="ChEBI" id="CHEBI:78494"/>
        <dbReference type="ChEBI" id="CHEBI:133044"/>
        <dbReference type="EC" id="2.3.2.6"/>
    </reaction>
</comment>
<comment type="catalytic activity">
    <reaction evidence="1">
        <text>L-phenylalanyl-tRNA(Phe) + an N-terminal L-alpha-aminoacyl-[protein] = an N-terminal L-phenylalanyl-L-alpha-aminoacyl-[protein] + tRNA(Phe)</text>
        <dbReference type="Rhea" id="RHEA:43632"/>
        <dbReference type="Rhea" id="RHEA-COMP:9668"/>
        <dbReference type="Rhea" id="RHEA-COMP:9699"/>
        <dbReference type="Rhea" id="RHEA-COMP:10636"/>
        <dbReference type="Rhea" id="RHEA-COMP:10637"/>
        <dbReference type="ChEBI" id="CHEBI:78442"/>
        <dbReference type="ChEBI" id="CHEBI:78531"/>
        <dbReference type="ChEBI" id="CHEBI:78597"/>
        <dbReference type="ChEBI" id="CHEBI:83561"/>
        <dbReference type="EC" id="2.3.2.6"/>
    </reaction>
</comment>
<comment type="subcellular location">
    <subcellularLocation>
        <location evidence="1">Cytoplasm</location>
    </subcellularLocation>
</comment>
<comment type="similarity">
    <text evidence="1">Belongs to the L/F-transferase family.</text>
</comment>